<comment type="function">
    <text evidence="1">Catalyzes the methylthiolation of an aspartic acid residue of ribosomal protein uS12.</text>
</comment>
<comment type="catalytic activity">
    <reaction evidence="1">
        <text>L-aspartate(89)-[ribosomal protein uS12]-hydrogen + (sulfur carrier)-SH + AH2 + 2 S-adenosyl-L-methionine = 3-methylsulfanyl-L-aspartate(89)-[ribosomal protein uS12]-hydrogen + (sulfur carrier)-H + 5'-deoxyadenosine + L-methionine + A + S-adenosyl-L-homocysteine + 2 H(+)</text>
        <dbReference type="Rhea" id="RHEA:37087"/>
        <dbReference type="Rhea" id="RHEA-COMP:10460"/>
        <dbReference type="Rhea" id="RHEA-COMP:10461"/>
        <dbReference type="Rhea" id="RHEA-COMP:14737"/>
        <dbReference type="Rhea" id="RHEA-COMP:14739"/>
        <dbReference type="ChEBI" id="CHEBI:13193"/>
        <dbReference type="ChEBI" id="CHEBI:15378"/>
        <dbReference type="ChEBI" id="CHEBI:17319"/>
        <dbReference type="ChEBI" id="CHEBI:17499"/>
        <dbReference type="ChEBI" id="CHEBI:29917"/>
        <dbReference type="ChEBI" id="CHEBI:29961"/>
        <dbReference type="ChEBI" id="CHEBI:57844"/>
        <dbReference type="ChEBI" id="CHEBI:57856"/>
        <dbReference type="ChEBI" id="CHEBI:59789"/>
        <dbReference type="ChEBI" id="CHEBI:64428"/>
        <dbReference type="ChEBI" id="CHEBI:73599"/>
        <dbReference type="EC" id="2.8.4.4"/>
    </reaction>
</comment>
<comment type="cofactor">
    <cofactor evidence="1">
        <name>[4Fe-4S] cluster</name>
        <dbReference type="ChEBI" id="CHEBI:49883"/>
    </cofactor>
    <text evidence="1">Binds 2 [4Fe-4S] clusters. One cluster is coordinated with 3 cysteines and an exchangeable S-adenosyl-L-methionine.</text>
</comment>
<comment type="subcellular location">
    <subcellularLocation>
        <location evidence="1">Cytoplasm</location>
    </subcellularLocation>
</comment>
<comment type="similarity">
    <text evidence="1">Belongs to the methylthiotransferase family. RimO subfamily.</text>
</comment>
<proteinExistence type="inferred from homology"/>
<gene>
    <name evidence="1" type="primary">rimO</name>
    <name type="ordered locus">SynWH7803_2206</name>
</gene>
<protein>
    <recommendedName>
        <fullName evidence="1">Ribosomal protein uS12 methylthiotransferase RimO</fullName>
        <shortName evidence="1">uS12 MTTase</shortName>
        <shortName evidence="1">uS12 methylthiotransferase</shortName>
        <ecNumber evidence="1">2.8.4.4</ecNumber>
    </recommendedName>
    <alternativeName>
        <fullName evidence="1">Ribosomal protein uS12 (aspartate-C(3))-methylthiotransferase</fullName>
    </alternativeName>
    <alternativeName>
        <fullName evidence="1">Ribosome maturation factor RimO</fullName>
    </alternativeName>
</protein>
<keyword id="KW-0004">4Fe-4S</keyword>
<keyword id="KW-0963">Cytoplasm</keyword>
<keyword id="KW-0408">Iron</keyword>
<keyword id="KW-0411">Iron-sulfur</keyword>
<keyword id="KW-0479">Metal-binding</keyword>
<keyword id="KW-1185">Reference proteome</keyword>
<keyword id="KW-0949">S-adenosyl-L-methionine</keyword>
<keyword id="KW-0808">Transferase</keyword>
<sequence>MPMSPDPRPGRDGASTKPTVAFAHLGCEKNRVDTEHMLGLLSEAGYGVSSDESVANVVVVNTCSFIQEAREESVRTLVGLAEQGKELIIAGCLAQHFQEELLESLPEAKAIVGTGDYQHIVEVLERVEAGERVNRVSSTPTFVADERLPRHRTTGEAVAYLKVAEGCDYRCAFCIIPHLRGNQRSRPIESIVAEAHQLAAEGVKELILISQITTNYGLDLYGRPRLADLLQALGDVEIPWIRVHYAYPTGLTNEVISAYRDVPNVLPYLDLPLQHSHPDVLRAMNRPWQADVNERLLDQIRSQLPEAVLRTTLIVGFPGETQEQFEHLAGFLERQQFDHVGVFTFSPEQGTAAAELPNPVDADIALARKDRLMTLQQPISAAANARWVGRTVDALIEQHNPETGAMIGRCARFAPEVDGEVHIAPRADGLQAAPGTMIPVQITGSDIYDLRAEIVGAASMVASARSAL</sequence>
<evidence type="ECO:0000255" key="1">
    <source>
        <dbReference type="HAMAP-Rule" id="MF_01865"/>
    </source>
</evidence>
<evidence type="ECO:0000255" key="2">
    <source>
        <dbReference type="PROSITE-ProRule" id="PRU01266"/>
    </source>
</evidence>
<dbReference type="EC" id="2.8.4.4" evidence="1"/>
<dbReference type="EMBL" id="CT971583">
    <property type="protein sequence ID" value="CAK24632.1"/>
    <property type="molecule type" value="Genomic_DNA"/>
</dbReference>
<dbReference type="SMR" id="A5GNW7"/>
<dbReference type="STRING" id="32051.SynWH7803_2206"/>
<dbReference type="KEGG" id="syx:SynWH7803_2206"/>
<dbReference type="eggNOG" id="COG0621">
    <property type="taxonomic scope" value="Bacteria"/>
</dbReference>
<dbReference type="HOGENOM" id="CLU_018697_0_1_3"/>
<dbReference type="OrthoDB" id="9805215at2"/>
<dbReference type="Proteomes" id="UP000001566">
    <property type="component" value="Chromosome"/>
</dbReference>
<dbReference type="GO" id="GO:0005829">
    <property type="term" value="C:cytosol"/>
    <property type="evidence" value="ECO:0007669"/>
    <property type="project" value="TreeGrafter"/>
</dbReference>
<dbReference type="GO" id="GO:0051539">
    <property type="term" value="F:4 iron, 4 sulfur cluster binding"/>
    <property type="evidence" value="ECO:0007669"/>
    <property type="project" value="UniProtKB-UniRule"/>
</dbReference>
<dbReference type="GO" id="GO:0035599">
    <property type="term" value="F:aspartic acid methylthiotransferase activity"/>
    <property type="evidence" value="ECO:0007669"/>
    <property type="project" value="TreeGrafter"/>
</dbReference>
<dbReference type="GO" id="GO:0046872">
    <property type="term" value="F:metal ion binding"/>
    <property type="evidence" value="ECO:0007669"/>
    <property type="project" value="UniProtKB-KW"/>
</dbReference>
<dbReference type="GO" id="GO:0103039">
    <property type="term" value="F:protein methylthiotransferase activity"/>
    <property type="evidence" value="ECO:0007669"/>
    <property type="project" value="UniProtKB-EC"/>
</dbReference>
<dbReference type="GO" id="GO:0006400">
    <property type="term" value="P:tRNA modification"/>
    <property type="evidence" value="ECO:0007669"/>
    <property type="project" value="InterPro"/>
</dbReference>
<dbReference type="CDD" id="cd01335">
    <property type="entry name" value="Radical_SAM"/>
    <property type="match status" value="1"/>
</dbReference>
<dbReference type="FunFam" id="3.80.30.20:FF:000001">
    <property type="entry name" value="tRNA-2-methylthio-N(6)-dimethylallyladenosine synthase 2"/>
    <property type="match status" value="1"/>
</dbReference>
<dbReference type="Gene3D" id="3.40.50.12160">
    <property type="entry name" value="Methylthiotransferase, N-terminal domain"/>
    <property type="match status" value="1"/>
</dbReference>
<dbReference type="Gene3D" id="2.40.50.140">
    <property type="entry name" value="Nucleic acid-binding proteins"/>
    <property type="match status" value="1"/>
</dbReference>
<dbReference type="Gene3D" id="3.80.30.20">
    <property type="entry name" value="tm_1862 like domain"/>
    <property type="match status" value="1"/>
</dbReference>
<dbReference type="HAMAP" id="MF_01865">
    <property type="entry name" value="MTTase_RimO"/>
    <property type="match status" value="1"/>
</dbReference>
<dbReference type="InterPro" id="IPR006638">
    <property type="entry name" value="Elp3/MiaA/NifB-like_rSAM"/>
</dbReference>
<dbReference type="InterPro" id="IPR005839">
    <property type="entry name" value="Methylthiotransferase"/>
</dbReference>
<dbReference type="InterPro" id="IPR020612">
    <property type="entry name" value="Methylthiotransferase_CS"/>
</dbReference>
<dbReference type="InterPro" id="IPR013848">
    <property type="entry name" value="Methylthiotransferase_N"/>
</dbReference>
<dbReference type="InterPro" id="IPR038135">
    <property type="entry name" value="Methylthiotransferase_N_sf"/>
</dbReference>
<dbReference type="InterPro" id="IPR012340">
    <property type="entry name" value="NA-bd_OB-fold"/>
</dbReference>
<dbReference type="InterPro" id="IPR005840">
    <property type="entry name" value="Ribosomal_uS12_MeSTrfase_RimO"/>
</dbReference>
<dbReference type="InterPro" id="IPR007197">
    <property type="entry name" value="rSAM"/>
</dbReference>
<dbReference type="InterPro" id="IPR023404">
    <property type="entry name" value="rSAM_horseshoe"/>
</dbReference>
<dbReference type="InterPro" id="IPR002792">
    <property type="entry name" value="TRAM_dom"/>
</dbReference>
<dbReference type="NCBIfam" id="TIGR01125">
    <property type="entry name" value="30S ribosomal protein S12 methylthiotransferase RimO"/>
    <property type="match status" value="1"/>
</dbReference>
<dbReference type="NCBIfam" id="TIGR00089">
    <property type="entry name" value="MiaB/RimO family radical SAM methylthiotransferase"/>
    <property type="match status" value="1"/>
</dbReference>
<dbReference type="PANTHER" id="PTHR43837">
    <property type="entry name" value="RIBOSOMAL PROTEIN S12 METHYLTHIOTRANSFERASE RIMO"/>
    <property type="match status" value="1"/>
</dbReference>
<dbReference type="PANTHER" id="PTHR43837:SF1">
    <property type="entry name" value="RIBOSOMAL PROTEIN US12 METHYLTHIOTRANSFERASE RIMO"/>
    <property type="match status" value="1"/>
</dbReference>
<dbReference type="Pfam" id="PF04055">
    <property type="entry name" value="Radical_SAM"/>
    <property type="match status" value="1"/>
</dbReference>
<dbReference type="Pfam" id="PF18693">
    <property type="entry name" value="TRAM_2"/>
    <property type="match status" value="1"/>
</dbReference>
<dbReference type="Pfam" id="PF00919">
    <property type="entry name" value="UPF0004"/>
    <property type="match status" value="1"/>
</dbReference>
<dbReference type="SFLD" id="SFLDG01082">
    <property type="entry name" value="B12-binding_domain_containing"/>
    <property type="match status" value="1"/>
</dbReference>
<dbReference type="SFLD" id="SFLDS00029">
    <property type="entry name" value="Radical_SAM"/>
    <property type="match status" value="1"/>
</dbReference>
<dbReference type="SFLD" id="SFLDF00274">
    <property type="entry name" value="ribosomal_protein_S12_methylth"/>
    <property type="match status" value="1"/>
</dbReference>
<dbReference type="SMART" id="SM00729">
    <property type="entry name" value="Elp3"/>
    <property type="match status" value="1"/>
</dbReference>
<dbReference type="SUPFAM" id="SSF102114">
    <property type="entry name" value="Radical SAM enzymes"/>
    <property type="match status" value="1"/>
</dbReference>
<dbReference type="PROSITE" id="PS51449">
    <property type="entry name" value="MTTASE_N"/>
    <property type="match status" value="1"/>
</dbReference>
<dbReference type="PROSITE" id="PS01278">
    <property type="entry name" value="MTTASE_RADICAL"/>
    <property type="match status" value="1"/>
</dbReference>
<dbReference type="PROSITE" id="PS51918">
    <property type="entry name" value="RADICAL_SAM"/>
    <property type="match status" value="1"/>
</dbReference>
<dbReference type="PROSITE" id="PS50926">
    <property type="entry name" value="TRAM"/>
    <property type="match status" value="1"/>
</dbReference>
<name>RIMO_SYNPW</name>
<feature type="chain" id="PRO_0000375038" description="Ribosomal protein uS12 methylthiotransferase RimO">
    <location>
        <begin position="1"/>
        <end position="468"/>
    </location>
</feature>
<feature type="domain" description="MTTase N-terminal" evidence="1">
    <location>
        <begin position="18"/>
        <end position="129"/>
    </location>
</feature>
<feature type="domain" description="Radical SAM core" evidence="2">
    <location>
        <begin position="153"/>
        <end position="382"/>
    </location>
</feature>
<feature type="domain" description="TRAM" evidence="1">
    <location>
        <begin position="385"/>
        <end position="456"/>
    </location>
</feature>
<feature type="binding site" evidence="1">
    <location>
        <position position="27"/>
    </location>
    <ligand>
        <name>[4Fe-4S] cluster</name>
        <dbReference type="ChEBI" id="CHEBI:49883"/>
        <label>1</label>
    </ligand>
</feature>
<feature type="binding site" evidence="1">
    <location>
        <position position="63"/>
    </location>
    <ligand>
        <name>[4Fe-4S] cluster</name>
        <dbReference type="ChEBI" id="CHEBI:49883"/>
        <label>1</label>
    </ligand>
</feature>
<feature type="binding site" evidence="1">
    <location>
        <position position="92"/>
    </location>
    <ligand>
        <name>[4Fe-4S] cluster</name>
        <dbReference type="ChEBI" id="CHEBI:49883"/>
        <label>1</label>
    </ligand>
</feature>
<feature type="binding site" evidence="1">
    <location>
        <position position="167"/>
    </location>
    <ligand>
        <name>[4Fe-4S] cluster</name>
        <dbReference type="ChEBI" id="CHEBI:49883"/>
        <label>2</label>
        <note>4Fe-4S-S-AdoMet</note>
    </ligand>
</feature>
<feature type="binding site" evidence="1">
    <location>
        <position position="171"/>
    </location>
    <ligand>
        <name>[4Fe-4S] cluster</name>
        <dbReference type="ChEBI" id="CHEBI:49883"/>
        <label>2</label>
        <note>4Fe-4S-S-AdoMet</note>
    </ligand>
</feature>
<feature type="binding site" evidence="1">
    <location>
        <position position="174"/>
    </location>
    <ligand>
        <name>[4Fe-4S] cluster</name>
        <dbReference type="ChEBI" id="CHEBI:49883"/>
        <label>2</label>
        <note>4Fe-4S-S-AdoMet</note>
    </ligand>
</feature>
<organism>
    <name type="scientific">Synechococcus sp. (strain WH7803)</name>
    <dbReference type="NCBI Taxonomy" id="32051"/>
    <lineage>
        <taxon>Bacteria</taxon>
        <taxon>Bacillati</taxon>
        <taxon>Cyanobacteriota</taxon>
        <taxon>Cyanophyceae</taxon>
        <taxon>Synechococcales</taxon>
        <taxon>Synechococcaceae</taxon>
        <taxon>Synechococcus</taxon>
    </lineage>
</organism>
<accession>A5GNW7</accession>
<reference key="1">
    <citation type="submission" date="2006-05" db="EMBL/GenBank/DDBJ databases">
        <authorList>
            <consortium name="Genoscope"/>
        </authorList>
    </citation>
    <scope>NUCLEOTIDE SEQUENCE [LARGE SCALE GENOMIC DNA]</scope>
    <source>
        <strain>WH7803</strain>
    </source>
</reference>